<proteinExistence type="inferred from homology"/>
<comment type="function">
    <text evidence="1">Catalyzes the condensation reaction of fatty acid synthesis by the addition to an acyl acceptor of two carbons from malonyl-ACP. Catalyzes the first condensation reaction which initiates fatty acid synthesis and may therefore play a role in governing the total rate of fatty acid production. Possesses both acetoacetyl-ACP synthase and acetyl transacylase activities. Its substrate specificity determines the biosynthesis of branched-chain and/or straight-chain of fatty acids.</text>
</comment>
<comment type="catalytic activity">
    <reaction evidence="1">
        <text>malonyl-[ACP] + acetyl-CoA + H(+) = 3-oxobutanoyl-[ACP] + CO2 + CoA</text>
        <dbReference type="Rhea" id="RHEA:12080"/>
        <dbReference type="Rhea" id="RHEA-COMP:9623"/>
        <dbReference type="Rhea" id="RHEA-COMP:9625"/>
        <dbReference type="ChEBI" id="CHEBI:15378"/>
        <dbReference type="ChEBI" id="CHEBI:16526"/>
        <dbReference type="ChEBI" id="CHEBI:57287"/>
        <dbReference type="ChEBI" id="CHEBI:57288"/>
        <dbReference type="ChEBI" id="CHEBI:78449"/>
        <dbReference type="ChEBI" id="CHEBI:78450"/>
        <dbReference type="EC" id="2.3.1.180"/>
    </reaction>
</comment>
<comment type="pathway">
    <text evidence="1">Lipid metabolism; fatty acid biosynthesis.</text>
</comment>
<comment type="subunit">
    <text evidence="1">Homodimer.</text>
</comment>
<comment type="subcellular location">
    <subcellularLocation>
        <location evidence="1">Cytoplasm</location>
    </subcellularLocation>
</comment>
<comment type="domain">
    <text evidence="1">The last Arg residue of the ACP-binding site is essential for the weak association between ACP/AcpP and FabH.</text>
</comment>
<comment type="similarity">
    <text evidence="1">Belongs to the thiolase-like superfamily. FabH family.</text>
</comment>
<accession>Q31D45</accession>
<reference key="1">
    <citation type="journal article" date="2006" name="Science">
        <title>Genomic islands and the ecology and evolution of Prochlorococcus.</title>
        <authorList>
            <person name="Coleman M.L."/>
            <person name="Sullivan M.B."/>
            <person name="Martiny A.C."/>
            <person name="Steglich C."/>
            <person name="Barry K."/>
            <person name="Delong E.F."/>
            <person name="Chisholm S.W."/>
        </authorList>
    </citation>
    <scope>NUCLEOTIDE SEQUENCE [LARGE SCALE GENOMIC DNA]</scope>
    <source>
        <strain>MIT 9312</strain>
    </source>
</reference>
<evidence type="ECO:0000255" key="1">
    <source>
        <dbReference type="HAMAP-Rule" id="MF_01815"/>
    </source>
</evidence>
<sequence>MEGIKFNQIGVSFKGSGSYVPDQILTNETISQKVDTSDEWIKSRTGISERRISGLGDNVNDMAYEAALSAIEMTNWDIKTIDLIVLATSTPHDLFGSAPSIQAKLGAHNAVAFDLTAACSGFLFALITASQFLKGGSFKRAIVIGADQLSSFVDWNDRRSCILFGDGAGALAIEATNEFDNFLGFDMRTDGERGSFLNLPSKNNKDLIIDNIDFLNGGFSPIQMNGQEVYKFAVREVPIILDNLFRKTNYTSDEVDWLILHQANQRILDSVGDRLKIPREKILSNLAKYGNTSAATIPLVMDEAIRNNRIKQNDIIATSGFGAGLSWGAALIKWG</sequence>
<name>FABH_PROM9</name>
<gene>
    <name evidence="1" type="primary">fabH</name>
    <name type="ordered locus">PMT9312_0138</name>
</gene>
<feature type="chain" id="PRO_1000056390" description="Beta-ketoacyl-[acyl-carrier-protein] synthase III">
    <location>
        <begin position="1"/>
        <end position="335"/>
    </location>
</feature>
<feature type="region of interest" description="ACP-binding" evidence="1">
    <location>
        <begin position="262"/>
        <end position="266"/>
    </location>
</feature>
<feature type="active site" evidence="1">
    <location>
        <position position="119"/>
    </location>
</feature>
<feature type="active site" evidence="1">
    <location>
        <position position="261"/>
    </location>
</feature>
<feature type="active site" evidence="1">
    <location>
        <position position="291"/>
    </location>
</feature>
<keyword id="KW-0012">Acyltransferase</keyword>
<keyword id="KW-0963">Cytoplasm</keyword>
<keyword id="KW-0275">Fatty acid biosynthesis</keyword>
<keyword id="KW-0276">Fatty acid metabolism</keyword>
<keyword id="KW-0444">Lipid biosynthesis</keyword>
<keyword id="KW-0443">Lipid metabolism</keyword>
<keyword id="KW-0511">Multifunctional enzyme</keyword>
<keyword id="KW-0808">Transferase</keyword>
<organism>
    <name type="scientific">Prochlorococcus marinus (strain MIT 9312)</name>
    <dbReference type="NCBI Taxonomy" id="74546"/>
    <lineage>
        <taxon>Bacteria</taxon>
        <taxon>Bacillati</taxon>
        <taxon>Cyanobacteriota</taxon>
        <taxon>Cyanophyceae</taxon>
        <taxon>Synechococcales</taxon>
        <taxon>Prochlorococcaceae</taxon>
        <taxon>Prochlorococcus</taxon>
    </lineage>
</organism>
<protein>
    <recommendedName>
        <fullName evidence="1">Beta-ketoacyl-[acyl-carrier-protein] synthase III</fullName>
        <shortName evidence="1">Beta-ketoacyl-ACP synthase III</shortName>
        <shortName evidence="1">KAS III</shortName>
        <ecNumber evidence="1">2.3.1.180</ecNumber>
    </recommendedName>
    <alternativeName>
        <fullName evidence="1">3-oxoacyl-[acyl-carrier-protein] synthase 3</fullName>
    </alternativeName>
    <alternativeName>
        <fullName evidence="1">3-oxoacyl-[acyl-carrier-protein] synthase III</fullName>
    </alternativeName>
</protein>
<dbReference type="EC" id="2.3.1.180" evidence="1"/>
<dbReference type="EMBL" id="CP000111">
    <property type="protein sequence ID" value="ABB49200.1"/>
    <property type="molecule type" value="Genomic_DNA"/>
</dbReference>
<dbReference type="RefSeq" id="WP_011375704.1">
    <property type="nucleotide sequence ID" value="NC_007577.1"/>
</dbReference>
<dbReference type="SMR" id="Q31D45"/>
<dbReference type="STRING" id="74546.PMT9312_0138"/>
<dbReference type="KEGG" id="pmi:PMT9312_0138"/>
<dbReference type="eggNOG" id="COG0332">
    <property type="taxonomic scope" value="Bacteria"/>
</dbReference>
<dbReference type="HOGENOM" id="CLU_039592_0_1_3"/>
<dbReference type="OrthoDB" id="9815506at2"/>
<dbReference type="UniPathway" id="UPA00094"/>
<dbReference type="Proteomes" id="UP000002715">
    <property type="component" value="Chromosome"/>
</dbReference>
<dbReference type="GO" id="GO:0005737">
    <property type="term" value="C:cytoplasm"/>
    <property type="evidence" value="ECO:0007669"/>
    <property type="project" value="UniProtKB-SubCell"/>
</dbReference>
<dbReference type="GO" id="GO:0004315">
    <property type="term" value="F:3-oxoacyl-[acyl-carrier-protein] synthase activity"/>
    <property type="evidence" value="ECO:0007669"/>
    <property type="project" value="InterPro"/>
</dbReference>
<dbReference type="GO" id="GO:0033818">
    <property type="term" value="F:beta-ketoacyl-acyl-carrier-protein synthase III activity"/>
    <property type="evidence" value="ECO:0007669"/>
    <property type="project" value="UniProtKB-UniRule"/>
</dbReference>
<dbReference type="GO" id="GO:0006633">
    <property type="term" value="P:fatty acid biosynthetic process"/>
    <property type="evidence" value="ECO:0007669"/>
    <property type="project" value="UniProtKB-UniRule"/>
</dbReference>
<dbReference type="CDD" id="cd00830">
    <property type="entry name" value="KAS_III"/>
    <property type="match status" value="1"/>
</dbReference>
<dbReference type="FunFam" id="3.40.47.10:FF:000004">
    <property type="entry name" value="3-oxoacyl-[acyl-carrier-protein] synthase 3"/>
    <property type="match status" value="1"/>
</dbReference>
<dbReference type="Gene3D" id="3.40.47.10">
    <property type="match status" value="1"/>
</dbReference>
<dbReference type="HAMAP" id="MF_01815">
    <property type="entry name" value="FabH"/>
    <property type="match status" value="1"/>
</dbReference>
<dbReference type="InterPro" id="IPR013747">
    <property type="entry name" value="ACP_syn_III_C"/>
</dbReference>
<dbReference type="InterPro" id="IPR013751">
    <property type="entry name" value="ACP_syn_III_N"/>
</dbReference>
<dbReference type="InterPro" id="IPR004655">
    <property type="entry name" value="FabH"/>
</dbReference>
<dbReference type="InterPro" id="IPR016039">
    <property type="entry name" value="Thiolase-like"/>
</dbReference>
<dbReference type="NCBIfam" id="TIGR00747">
    <property type="entry name" value="fabH"/>
    <property type="match status" value="1"/>
</dbReference>
<dbReference type="NCBIfam" id="NF006829">
    <property type="entry name" value="PRK09352.1"/>
    <property type="match status" value="1"/>
</dbReference>
<dbReference type="PANTHER" id="PTHR43091">
    <property type="entry name" value="3-OXOACYL-[ACYL-CARRIER-PROTEIN] SYNTHASE"/>
    <property type="match status" value="1"/>
</dbReference>
<dbReference type="PANTHER" id="PTHR43091:SF1">
    <property type="entry name" value="BETA-KETOACYL-[ACYL-CARRIER-PROTEIN] SYNTHASE III, CHLOROPLASTIC"/>
    <property type="match status" value="1"/>
</dbReference>
<dbReference type="Pfam" id="PF08545">
    <property type="entry name" value="ACP_syn_III"/>
    <property type="match status" value="1"/>
</dbReference>
<dbReference type="Pfam" id="PF08541">
    <property type="entry name" value="ACP_syn_III_C"/>
    <property type="match status" value="1"/>
</dbReference>
<dbReference type="SUPFAM" id="SSF53901">
    <property type="entry name" value="Thiolase-like"/>
    <property type="match status" value="1"/>
</dbReference>